<evidence type="ECO:0000250" key="1"/>
<comment type="subcellular location">
    <subcellularLocation>
        <location evidence="1">Cytoplasm</location>
    </subcellularLocation>
</comment>
<proteinExistence type="inferred from homology"/>
<dbReference type="EMBL" id="AE017197">
    <property type="protein sequence ID" value="AAU04123.1"/>
    <property type="molecule type" value="Genomic_DNA"/>
</dbReference>
<dbReference type="RefSeq" id="WP_011191100.1">
    <property type="nucleotide sequence ID" value="NC_006142.1"/>
</dbReference>
<dbReference type="SMR" id="Q68W69"/>
<dbReference type="KEGG" id="rty:RT0662"/>
<dbReference type="eggNOG" id="COG1278">
    <property type="taxonomic scope" value="Bacteria"/>
</dbReference>
<dbReference type="HOGENOM" id="CLU_117621_4_1_5"/>
<dbReference type="OrthoDB" id="9801074at2"/>
<dbReference type="Proteomes" id="UP000000604">
    <property type="component" value="Chromosome"/>
</dbReference>
<dbReference type="GO" id="GO:0005829">
    <property type="term" value="C:cytosol"/>
    <property type="evidence" value="ECO:0007669"/>
    <property type="project" value="UniProtKB-ARBA"/>
</dbReference>
<dbReference type="GO" id="GO:0003677">
    <property type="term" value="F:DNA binding"/>
    <property type="evidence" value="ECO:0007669"/>
    <property type="project" value="UniProtKB-KW"/>
</dbReference>
<dbReference type="CDD" id="cd04458">
    <property type="entry name" value="CSP_CDS"/>
    <property type="match status" value="1"/>
</dbReference>
<dbReference type="Gene3D" id="2.40.50.140">
    <property type="entry name" value="Nucleic acid-binding proteins"/>
    <property type="match status" value="1"/>
</dbReference>
<dbReference type="InterPro" id="IPR012156">
    <property type="entry name" value="Cold_shock_CspA"/>
</dbReference>
<dbReference type="InterPro" id="IPR050181">
    <property type="entry name" value="Cold_shock_domain"/>
</dbReference>
<dbReference type="InterPro" id="IPR011129">
    <property type="entry name" value="CSD"/>
</dbReference>
<dbReference type="InterPro" id="IPR019844">
    <property type="entry name" value="CSD_CS"/>
</dbReference>
<dbReference type="InterPro" id="IPR002059">
    <property type="entry name" value="CSP_DNA-bd"/>
</dbReference>
<dbReference type="InterPro" id="IPR012340">
    <property type="entry name" value="NA-bd_OB-fold"/>
</dbReference>
<dbReference type="PANTHER" id="PTHR11544">
    <property type="entry name" value="COLD SHOCK DOMAIN CONTAINING PROTEINS"/>
    <property type="match status" value="1"/>
</dbReference>
<dbReference type="Pfam" id="PF00313">
    <property type="entry name" value="CSD"/>
    <property type="match status" value="1"/>
</dbReference>
<dbReference type="PIRSF" id="PIRSF002599">
    <property type="entry name" value="Cold_shock_A"/>
    <property type="match status" value="1"/>
</dbReference>
<dbReference type="PRINTS" id="PR00050">
    <property type="entry name" value="COLDSHOCK"/>
</dbReference>
<dbReference type="SMART" id="SM00357">
    <property type="entry name" value="CSP"/>
    <property type="match status" value="1"/>
</dbReference>
<dbReference type="SUPFAM" id="SSF50249">
    <property type="entry name" value="Nucleic acid-binding proteins"/>
    <property type="match status" value="1"/>
</dbReference>
<dbReference type="PROSITE" id="PS00352">
    <property type="entry name" value="CSD_1"/>
    <property type="match status" value="1"/>
</dbReference>
<dbReference type="PROSITE" id="PS51857">
    <property type="entry name" value="CSD_2"/>
    <property type="match status" value="1"/>
</dbReference>
<accession>Q68W69</accession>
<reference key="1">
    <citation type="journal article" date="2004" name="J. Bacteriol.">
        <title>Complete genome sequence of Rickettsia typhi and comparison with sequences of other Rickettsiae.</title>
        <authorList>
            <person name="McLeod M.P."/>
            <person name="Qin X."/>
            <person name="Karpathy S.E."/>
            <person name="Gioia J."/>
            <person name="Highlander S.K."/>
            <person name="Fox G.E."/>
            <person name="McNeill T.Z."/>
            <person name="Jiang H."/>
            <person name="Muzny D."/>
            <person name="Jacob L.S."/>
            <person name="Hawes A.C."/>
            <person name="Sodergren E."/>
            <person name="Gill R."/>
            <person name="Hume J."/>
            <person name="Morgan M."/>
            <person name="Fan G."/>
            <person name="Amin A.G."/>
            <person name="Gibbs R.A."/>
            <person name="Hong C."/>
            <person name="Yu X.-J."/>
            <person name="Walker D.H."/>
            <person name="Weinstock G.M."/>
        </authorList>
    </citation>
    <scope>NUCLEOTIDE SEQUENCE [LARGE SCALE GENOMIC DNA]</scope>
    <source>
        <strain>ATCC VR-144 / Wilmington</strain>
    </source>
</reference>
<protein>
    <recommendedName>
        <fullName>Cold shock-like protein CspA</fullName>
    </recommendedName>
</protein>
<sequence>MATNIVGKVKWYNSTKNFGFIEQDNGGKDVFVHKSAIEAAGLHSLKERQEVIFDIEEKQGKAYAINLRVK</sequence>
<name>CSPA_RICTY</name>
<feature type="chain" id="PRO_0000281065" description="Cold shock-like protein CspA">
    <location>
        <begin position="1"/>
        <end position="70"/>
    </location>
</feature>
<feature type="domain" description="CSD">
    <location>
        <begin position="7"/>
        <end position="67"/>
    </location>
</feature>
<gene>
    <name type="primary">cspA</name>
    <name type="ordered locus">RT0662</name>
</gene>
<keyword id="KW-0010">Activator</keyword>
<keyword id="KW-0963">Cytoplasm</keyword>
<keyword id="KW-0238">DNA-binding</keyword>
<keyword id="KW-0804">Transcription</keyword>
<keyword id="KW-0805">Transcription regulation</keyword>
<organism>
    <name type="scientific">Rickettsia typhi (strain ATCC VR-144 / Wilmington)</name>
    <dbReference type="NCBI Taxonomy" id="257363"/>
    <lineage>
        <taxon>Bacteria</taxon>
        <taxon>Pseudomonadati</taxon>
        <taxon>Pseudomonadota</taxon>
        <taxon>Alphaproteobacteria</taxon>
        <taxon>Rickettsiales</taxon>
        <taxon>Rickettsiaceae</taxon>
        <taxon>Rickettsieae</taxon>
        <taxon>Rickettsia</taxon>
        <taxon>typhus group</taxon>
    </lineage>
</organism>